<keyword id="KW-0479">Metal-binding</keyword>
<keyword id="KW-0539">Nucleus</keyword>
<keyword id="KW-1185">Reference proteome</keyword>
<keyword id="KW-0677">Repeat</keyword>
<keyword id="KW-0862">Zinc</keyword>
<keyword id="KW-0863">Zinc-finger</keyword>
<comment type="function">
    <text>Putative transcription activator involved in regulating light control of development.</text>
</comment>
<comment type="subcellular location">
    <subcellularLocation>
        <location evidence="3">Nucleus</location>
    </subcellularLocation>
    <text>The nuclear localization is independent of the light treatment.</text>
</comment>
<comment type="tissue specificity">
    <text evidence="3">Expressed in hypocotyls, rosette and cauline leaves, inflorescences stems, flowers and siliques.</text>
</comment>
<comment type="induction">
    <text evidence="3">Up-regulated in hypocotyls by far-red light treatment.</text>
</comment>
<comment type="similarity">
    <text evidence="4">Belongs to the FHY3/FAR1 family.</text>
</comment>
<organism>
    <name type="scientific">Arabidopsis thaliana</name>
    <name type="common">Mouse-ear cress</name>
    <dbReference type="NCBI Taxonomy" id="3702"/>
    <lineage>
        <taxon>Eukaryota</taxon>
        <taxon>Viridiplantae</taxon>
        <taxon>Streptophyta</taxon>
        <taxon>Embryophyta</taxon>
        <taxon>Tracheophyta</taxon>
        <taxon>Spermatophyta</taxon>
        <taxon>Magnoliopsida</taxon>
        <taxon>eudicotyledons</taxon>
        <taxon>Gunneridae</taxon>
        <taxon>Pentapetalae</taxon>
        <taxon>rosids</taxon>
        <taxon>malvids</taxon>
        <taxon>Brassicales</taxon>
        <taxon>Brassicaceae</taxon>
        <taxon>Camelineae</taxon>
        <taxon>Arabidopsis</taxon>
    </lineage>
</organism>
<dbReference type="EMBL" id="AC068655">
    <property type="status" value="NOT_ANNOTATED_CDS"/>
    <property type="molecule type" value="Genomic_DNA"/>
</dbReference>
<dbReference type="EMBL" id="CP002688">
    <property type="protein sequence ID" value="AED92633.1"/>
    <property type="molecule type" value="Genomic_DNA"/>
</dbReference>
<dbReference type="EMBL" id="CP002688">
    <property type="protein sequence ID" value="ANM69128.1"/>
    <property type="molecule type" value="Genomic_DNA"/>
</dbReference>
<dbReference type="RefSeq" id="NP_001330829.1">
    <property type="nucleotide sequence ID" value="NM_001343577.1"/>
</dbReference>
<dbReference type="RefSeq" id="NP_197397.1">
    <property type="nucleotide sequence ID" value="NM_121901.2"/>
</dbReference>
<dbReference type="BioGRID" id="17290">
    <property type="interactions" value="3"/>
</dbReference>
<dbReference type="FunCoup" id="Q3E7I5">
    <property type="interactions" value="617"/>
</dbReference>
<dbReference type="IntAct" id="Q3E7I5">
    <property type="interactions" value="3"/>
</dbReference>
<dbReference type="STRING" id="3702.Q3E7I5"/>
<dbReference type="iPTMnet" id="Q3E7I5"/>
<dbReference type="PaxDb" id="3702-AT5G18960.1"/>
<dbReference type="ProteomicsDB" id="230531"/>
<dbReference type="EnsemblPlants" id="AT5G18960.1">
    <property type="protein sequence ID" value="AT5G18960.1"/>
    <property type="gene ID" value="AT5G18960"/>
</dbReference>
<dbReference type="EnsemblPlants" id="AT5G18960.2">
    <property type="protein sequence ID" value="AT5G18960.2"/>
    <property type="gene ID" value="AT5G18960"/>
</dbReference>
<dbReference type="GeneID" id="832014"/>
<dbReference type="Gramene" id="AT5G18960.1">
    <property type="protein sequence ID" value="AT5G18960.1"/>
    <property type="gene ID" value="AT5G18960"/>
</dbReference>
<dbReference type="Gramene" id="AT5G18960.2">
    <property type="protein sequence ID" value="AT5G18960.2"/>
    <property type="gene ID" value="AT5G18960"/>
</dbReference>
<dbReference type="KEGG" id="ath:AT5G18960"/>
<dbReference type="Araport" id="AT5G18960"/>
<dbReference type="TAIR" id="AT5G18960">
    <property type="gene designation" value="FRS12"/>
</dbReference>
<dbReference type="eggNOG" id="ENOG502QVUN">
    <property type="taxonomic scope" value="Eukaryota"/>
</dbReference>
<dbReference type="HOGENOM" id="CLU_008459_7_2_1"/>
<dbReference type="InParanoid" id="Q3E7I5"/>
<dbReference type="OMA" id="SGENCTP"/>
<dbReference type="PhylomeDB" id="Q3E7I5"/>
<dbReference type="PRO" id="PR:Q3E7I5"/>
<dbReference type="Proteomes" id="UP000006548">
    <property type="component" value="Chromosome 5"/>
</dbReference>
<dbReference type="ExpressionAtlas" id="Q3E7I5">
    <property type="expression patterns" value="baseline and differential"/>
</dbReference>
<dbReference type="GO" id="GO:0005634">
    <property type="term" value="C:nucleus"/>
    <property type="evidence" value="ECO:0007669"/>
    <property type="project" value="UniProtKB-SubCell"/>
</dbReference>
<dbReference type="GO" id="GO:0008270">
    <property type="term" value="F:zinc ion binding"/>
    <property type="evidence" value="ECO:0007669"/>
    <property type="project" value="UniProtKB-KW"/>
</dbReference>
<dbReference type="GO" id="GO:0006355">
    <property type="term" value="P:regulation of DNA-templated transcription"/>
    <property type="evidence" value="ECO:0007669"/>
    <property type="project" value="InterPro"/>
</dbReference>
<dbReference type="InterPro" id="IPR004330">
    <property type="entry name" value="FAR1_DNA_bnd_dom"/>
</dbReference>
<dbReference type="InterPro" id="IPR031052">
    <property type="entry name" value="FHY3/FAR1"/>
</dbReference>
<dbReference type="InterPro" id="IPR018289">
    <property type="entry name" value="MULE_transposase_dom"/>
</dbReference>
<dbReference type="InterPro" id="IPR006564">
    <property type="entry name" value="Znf_PMZ"/>
</dbReference>
<dbReference type="InterPro" id="IPR007527">
    <property type="entry name" value="Znf_SWIM"/>
</dbReference>
<dbReference type="PANTHER" id="PTHR31669">
    <property type="entry name" value="PROTEIN FAR1-RELATED SEQUENCE 10-RELATED"/>
    <property type="match status" value="1"/>
</dbReference>
<dbReference type="PANTHER" id="PTHR31669:SF149">
    <property type="entry name" value="PROTEIN FAR1-RELATED SEQUENCE 12-RELATED"/>
    <property type="match status" value="1"/>
</dbReference>
<dbReference type="Pfam" id="PF03101">
    <property type="entry name" value="FAR1"/>
    <property type="match status" value="2"/>
</dbReference>
<dbReference type="Pfam" id="PF10551">
    <property type="entry name" value="MULE"/>
    <property type="match status" value="1"/>
</dbReference>
<dbReference type="Pfam" id="PF04434">
    <property type="entry name" value="SWIM"/>
    <property type="match status" value="1"/>
</dbReference>
<dbReference type="SMART" id="SM00575">
    <property type="entry name" value="ZnF_PMZ"/>
    <property type="match status" value="1"/>
</dbReference>
<dbReference type="PROSITE" id="PS50966">
    <property type="entry name" value="ZF_SWIM"/>
    <property type="match status" value="1"/>
</dbReference>
<protein>
    <recommendedName>
        <fullName>Protein FAR1-RELATED SEQUENCE 12</fullName>
    </recommendedName>
</protein>
<sequence>MESVDTELTSFNNMVAKSSYPVRILHHNNGISEDEEGGSGVEPYVGLEFDTAEEAREFYNAYAARTGFKVRTGQLYRSRTDGTVSSRRFVCSKEGFQLNSRTGCTAFIRVQRRDTGKWVLDQIQKEHNHELGGEGSVEETTPRPSRAPAPTKLGVTVNPHRPKMKVVDESDRETRSCPGGFKRFKGGGGEGEVSDDHHQTQQAKAVTGTEPYAGLEFGSANEACQFYQAYAEVVGFRVRIGQLFRSKVDGSITSRRFVCSREGFQHPSRMGCGAYMRIKRQDSGGWIVDRLNKDHNHDLEPGKKNDAGMKKIPDDGTGGLDSVDLIELNDFGNNHIKKTRENRIGKEWYPLLLDYFQSRQTEDMGFFYAVELDVNNGSCMSIFWADSRARFACSQFGDSVVFDTSYRKGSYSVPFATIIGFNHHRQPVLLGCAMVADESKEAFLWLFQTWLRAMSGRRPRSIVADQDLPIQQALVQVFPGAHHRYSAWQIREKERENLIPFPSEFKYEYEKCIYQTQTIVEFDSVWSALINKYGLRDDVWLREIYEQRENWVPAYLRASFFAGIPINGTIEPFFGASLDALTPLREFISRYEQALEQRREEERKEDFNSYNLQPFLQTKEPVEEQCRRLYTLTVFRIFQNELVQSYNYLCLKTYEEGAISRFLVRKCGNESEKHAVTFSASNLNSSCSCQMFEHEGLLCRHILKVFNLLDIRELPSRYILHRWTKNAEFGFVRDMESGVSAQDLKALMVWSLREAASKYIEFGTSSLEKYKLAYEIMREGGKKLCWQR</sequence>
<accession>Q3E7I5</accession>
<evidence type="ECO:0000255" key="1">
    <source>
        <dbReference type="PROSITE-ProRule" id="PRU00325"/>
    </source>
</evidence>
<evidence type="ECO:0000256" key="2">
    <source>
        <dbReference type="SAM" id="MobiDB-lite"/>
    </source>
</evidence>
<evidence type="ECO:0000269" key="3">
    <source>
    </source>
</evidence>
<evidence type="ECO:0000305" key="4"/>
<feature type="chain" id="PRO_0000363490" description="Protein FAR1-RELATED SEQUENCE 12">
    <location>
        <begin position="1"/>
        <end position="788"/>
    </location>
</feature>
<feature type="domain" description="FAR1 1">
    <location>
        <begin position="57"/>
        <end position="133"/>
    </location>
</feature>
<feature type="domain" description="FAR1 2">
    <location>
        <begin position="225"/>
        <end position="301"/>
    </location>
</feature>
<feature type="domain" description="MULE">
    <location>
        <begin position="399"/>
        <end position="495"/>
    </location>
</feature>
<feature type="zinc finger region" description="SWIM-type" evidence="1">
    <location>
        <begin position="674"/>
        <end position="710"/>
    </location>
</feature>
<feature type="region of interest" description="Disordered" evidence="2">
    <location>
        <begin position="127"/>
        <end position="200"/>
    </location>
</feature>
<feature type="compositionally biased region" description="Low complexity" evidence="2">
    <location>
        <begin position="142"/>
        <end position="151"/>
    </location>
</feature>
<feature type="compositionally biased region" description="Basic and acidic residues" evidence="2">
    <location>
        <begin position="165"/>
        <end position="175"/>
    </location>
</feature>
<gene>
    <name type="primary">FRS12</name>
    <name type="ordered locus">At5g18960</name>
    <name type="ORF">F17K4.210</name>
</gene>
<name>FRS12_ARATH</name>
<proteinExistence type="evidence at transcript level"/>
<reference key="1">
    <citation type="journal article" date="2000" name="Nature">
        <title>Sequence and analysis of chromosome 5 of the plant Arabidopsis thaliana.</title>
        <authorList>
            <person name="Tabata S."/>
            <person name="Kaneko T."/>
            <person name="Nakamura Y."/>
            <person name="Kotani H."/>
            <person name="Kato T."/>
            <person name="Asamizu E."/>
            <person name="Miyajima N."/>
            <person name="Sasamoto S."/>
            <person name="Kimura T."/>
            <person name="Hosouchi T."/>
            <person name="Kawashima K."/>
            <person name="Kohara M."/>
            <person name="Matsumoto M."/>
            <person name="Matsuno A."/>
            <person name="Muraki A."/>
            <person name="Nakayama S."/>
            <person name="Nakazaki N."/>
            <person name="Naruo K."/>
            <person name="Okumura S."/>
            <person name="Shinpo S."/>
            <person name="Takeuchi C."/>
            <person name="Wada T."/>
            <person name="Watanabe A."/>
            <person name="Yamada M."/>
            <person name="Yasuda M."/>
            <person name="Sato S."/>
            <person name="de la Bastide M."/>
            <person name="Huang E."/>
            <person name="Spiegel L."/>
            <person name="Gnoj L."/>
            <person name="O'Shaughnessy A."/>
            <person name="Preston R."/>
            <person name="Habermann K."/>
            <person name="Murray J."/>
            <person name="Johnson D."/>
            <person name="Rohlfing T."/>
            <person name="Nelson J."/>
            <person name="Stoneking T."/>
            <person name="Pepin K."/>
            <person name="Spieth J."/>
            <person name="Sekhon M."/>
            <person name="Armstrong J."/>
            <person name="Becker M."/>
            <person name="Belter E."/>
            <person name="Cordum H."/>
            <person name="Cordes M."/>
            <person name="Courtney L."/>
            <person name="Courtney W."/>
            <person name="Dante M."/>
            <person name="Du H."/>
            <person name="Edwards J."/>
            <person name="Fryman J."/>
            <person name="Haakensen B."/>
            <person name="Lamar E."/>
            <person name="Latreille P."/>
            <person name="Leonard S."/>
            <person name="Meyer R."/>
            <person name="Mulvaney E."/>
            <person name="Ozersky P."/>
            <person name="Riley A."/>
            <person name="Strowmatt C."/>
            <person name="Wagner-McPherson C."/>
            <person name="Wollam A."/>
            <person name="Yoakum M."/>
            <person name="Bell M."/>
            <person name="Dedhia N."/>
            <person name="Parnell L."/>
            <person name="Shah R."/>
            <person name="Rodriguez M."/>
            <person name="Hoon See L."/>
            <person name="Vil D."/>
            <person name="Baker J."/>
            <person name="Kirchoff K."/>
            <person name="Toth K."/>
            <person name="King L."/>
            <person name="Bahret A."/>
            <person name="Miller B."/>
            <person name="Marra M.A."/>
            <person name="Martienssen R."/>
            <person name="McCombie W.R."/>
            <person name="Wilson R.K."/>
            <person name="Murphy G."/>
            <person name="Bancroft I."/>
            <person name="Volckaert G."/>
            <person name="Wambutt R."/>
            <person name="Duesterhoeft A."/>
            <person name="Stiekema W."/>
            <person name="Pohl T."/>
            <person name="Entian K.-D."/>
            <person name="Terryn N."/>
            <person name="Hartley N."/>
            <person name="Bent E."/>
            <person name="Johnson S."/>
            <person name="Langham S.-A."/>
            <person name="McCullagh B."/>
            <person name="Robben J."/>
            <person name="Grymonprez B."/>
            <person name="Zimmermann W."/>
            <person name="Ramsperger U."/>
            <person name="Wedler H."/>
            <person name="Balke K."/>
            <person name="Wedler E."/>
            <person name="Peters S."/>
            <person name="van Staveren M."/>
            <person name="Dirkse W."/>
            <person name="Mooijman P."/>
            <person name="Klein Lankhorst R."/>
            <person name="Weitzenegger T."/>
            <person name="Bothe G."/>
            <person name="Rose M."/>
            <person name="Hauf J."/>
            <person name="Berneiser S."/>
            <person name="Hempel S."/>
            <person name="Feldpausch M."/>
            <person name="Lamberth S."/>
            <person name="Villarroel R."/>
            <person name="Gielen J."/>
            <person name="Ardiles W."/>
            <person name="Bents O."/>
            <person name="Lemcke K."/>
            <person name="Kolesov G."/>
            <person name="Mayer K.F.X."/>
            <person name="Rudd S."/>
            <person name="Schoof H."/>
            <person name="Schueller C."/>
            <person name="Zaccaria P."/>
            <person name="Mewes H.-W."/>
            <person name="Bevan M."/>
            <person name="Fransz P.F."/>
        </authorList>
    </citation>
    <scope>NUCLEOTIDE SEQUENCE [LARGE SCALE GENOMIC DNA]</scope>
    <source>
        <strain>cv. Columbia</strain>
    </source>
</reference>
<reference key="2">
    <citation type="journal article" date="2017" name="Plant J.">
        <title>Araport11: a complete reannotation of the Arabidopsis thaliana reference genome.</title>
        <authorList>
            <person name="Cheng C.Y."/>
            <person name="Krishnakumar V."/>
            <person name="Chan A.P."/>
            <person name="Thibaud-Nissen F."/>
            <person name="Schobel S."/>
            <person name="Town C.D."/>
        </authorList>
    </citation>
    <scope>GENOME REANNOTATION</scope>
    <source>
        <strain>cv. Columbia</strain>
    </source>
</reference>
<reference key="3">
    <citation type="journal article" date="2004" name="Plant Physiol.">
        <title>Arabidopsis FHY3/FAR1 gene family and distinct roles of its members in light control of Arabidopsis development.</title>
        <authorList>
            <person name="Lin R."/>
            <person name="Wang H."/>
        </authorList>
    </citation>
    <scope>TISSUE SPECIFICITY</scope>
    <scope>INDUCTION</scope>
    <scope>SUBCELLULAR LOCATION</scope>
    <scope>GENE FAMILY</scope>
    <scope>NOMENCLATURE</scope>
</reference>